<reference key="1">
    <citation type="journal article" date="1998" name="Mar. Environ. Res.">
        <title>Metallothionein cDNA sequences and gene expression in arctic char (Salvelinus alpinus) following metal and PCB exposure.</title>
        <authorList>
            <person name="Gerpe M."/>
            <person name="Kling P."/>
            <person name="Olsson P.-E."/>
        </authorList>
    </citation>
    <scope>NUCLEOTIDE SEQUENCE</scope>
    <source>
        <tissue>Liver</tissue>
    </source>
</reference>
<reference key="2">
    <citation type="submission" date="2003-07" db="EMBL/GenBank/DDBJ databases">
        <title>Discovering single nucleotide polymorphisms in the introns of fish genes.</title>
        <authorList>
            <person name="McGowan C."/>
            <person name="Davidson E.A."/>
            <person name="Davidson W.S."/>
        </authorList>
    </citation>
    <scope>NUCLEOTIDE SEQUENCE [GENOMIC DNA]</scope>
</reference>
<organism>
    <name type="scientific">Salvelinus alpinus</name>
    <name type="common">Arctic char</name>
    <name type="synonym">Salmo alpinus</name>
    <dbReference type="NCBI Taxonomy" id="8036"/>
    <lineage>
        <taxon>Eukaryota</taxon>
        <taxon>Metazoa</taxon>
        <taxon>Chordata</taxon>
        <taxon>Craniata</taxon>
        <taxon>Vertebrata</taxon>
        <taxon>Euteleostomi</taxon>
        <taxon>Actinopterygii</taxon>
        <taxon>Neopterygii</taxon>
        <taxon>Teleostei</taxon>
        <taxon>Protacanthopterygii</taxon>
        <taxon>Salmoniformes</taxon>
        <taxon>Salmonidae</taxon>
        <taxon>Salmoninae</taxon>
        <taxon>Salvelinus</taxon>
    </lineage>
</organism>
<gene>
    <name type="primary">mtb</name>
</gene>
<proteinExistence type="inferred from homology"/>
<name>MTB_SALAL</name>
<sequence length="60" mass="6033">MDPCECSKTGSCNCGGSCKCSNCACTSCKKSCCPCCPSDCSKCASGCVCKGKTCDTSCCQ</sequence>
<protein>
    <recommendedName>
        <fullName>Metallothionein B</fullName>
        <shortName>MT-B</shortName>
    </recommendedName>
</protein>
<accession>P68502</accession>
<accession>P09862</accession>
<accession>Q7ZZW6</accession>
<feature type="chain" id="PRO_0000197313" description="Metallothionein B">
    <location>
        <begin position="1"/>
        <end position="60"/>
    </location>
</feature>
<feature type="region of interest" description="Beta">
    <location>
        <begin position="1"/>
        <end position="28"/>
    </location>
</feature>
<feature type="region of interest" description="Alpha">
    <location>
        <begin position="29"/>
        <end position="60"/>
    </location>
</feature>
<feature type="binding site" evidence="2">
    <location>
        <position position="4"/>
    </location>
    <ligand>
        <name>a divalent metal cation</name>
        <dbReference type="ChEBI" id="CHEBI:60240"/>
        <label>1</label>
        <note>in cluster B</note>
    </ligand>
</feature>
<feature type="binding site" evidence="2">
    <location>
        <position position="6"/>
    </location>
    <ligand>
        <name>a divalent metal cation</name>
        <dbReference type="ChEBI" id="CHEBI:60240"/>
        <label>1</label>
        <note>in cluster B</note>
    </ligand>
</feature>
<feature type="binding site" evidence="2">
    <location>
        <position position="6"/>
    </location>
    <ligand>
        <name>a divalent metal cation</name>
        <dbReference type="ChEBI" id="CHEBI:60240"/>
        <label>2</label>
        <note>in cluster B</note>
    </ligand>
</feature>
<feature type="binding site" evidence="2">
    <location>
        <position position="12"/>
    </location>
    <ligand>
        <name>a divalent metal cation</name>
        <dbReference type="ChEBI" id="CHEBI:60240"/>
        <label>2</label>
        <note>in cluster B</note>
    </ligand>
</feature>
<feature type="binding site" evidence="2">
    <location>
        <position position="14"/>
    </location>
    <ligand>
        <name>a divalent metal cation</name>
        <dbReference type="ChEBI" id="CHEBI:60240"/>
        <label>2</label>
        <note>in cluster B</note>
    </ligand>
</feature>
<feature type="binding site" evidence="2">
    <location>
        <position position="14"/>
    </location>
    <ligand>
        <name>a divalent metal cation</name>
        <dbReference type="ChEBI" id="CHEBI:60240"/>
        <label>3</label>
        <note>in cluster B</note>
    </ligand>
</feature>
<feature type="binding site" evidence="2">
    <location>
        <position position="18"/>
    </location>
    <ligand>
        <name>a divalent metal cation</name>
        <dbReference type="ChEBI" id="CHEBI:60240"/>
        <label>3</label>
        <note>in cluster B</note>
    </ligand>
</feature>
<feature type="binding site" evidence="2">
    <location>
        <position position="20"/>
    </location>
    <ligand>
        <name>a divalent metal cation</name>
        <dbReference type="ChEBI" id="CHEBI:60240"/>
        <label>1</label>
        <note>in cluster B</note>
    </ligand>
</feature>
<feature type="binding site" evidence="2">
    <location>
        <position position="23"/>
    </location>
    <ligand>
        <name>a divalent metal cation</name>
        <dbReference type="ChEBI" id="CHEBI:60240"/>
        <label>1</label>
        <note>in cluster B</note>
    </ligand>
</feature>
<feature type="binding site" evidence="2">
    <location>
        <position position="23"/>
    </location>
    <ligand>
        <name>a divalent metal cation</name>
        <dbReference type="ChEBI" id="CHEBI:60240"/>
        <label>3</label>
        <note>in cluster B</note>
    </ligand>
</feature>
<feature type="binding site" evidence="2">
    <location>
        <position position="25"/>
    </location>
    <ligand>
        <name>a divalent metal cation</name>
        <dbReference type="ChEBI" id="CHEBI:60240"/>
        <label>2</label>
        <note>in cluster B</note>
    </ligand>
</feature>
<feature type="binding site" evidence="2">
    <location>
        <position position="28"/>
    </location>
    <ligand>
        <name>a divalent metal cation</name>
        <dbReference type="ChEBI" id="CHEBI:60240"/>
        <label>3</label>
        <note>in cluster B</note>
    </ligand>
</feature>
<feature type="binding site" evidence="2">
    <location>
        <position position="32"/>
    </location>
    <ligand>
        <name>a divalent metal cation</name>
        <dbReference type="ChEBI" id="CHEBI:60240"/>
        <label>4</label>
        <note>in cluster A</note>
    </ligand>
</feature>
<feature type="binding site" evidence="2">
    <location>
        <position position="33"/>
    </location>
    <ligand>
        <name>a divalent metal cation</name>
        <dbReference type="ChEBI" id="CHEBI:60240"/>
        <label>4</label>
        <note>in cluster A</note>
    </ligand>
</feature>
<feature type="binding site" evidence="2">
    <location>
        <position position="33"/>
    </location>
    <ligand>
        <name>a divalent metal cation</name>
        <dbReference type="ChEBI" id="CHEBI:60240"/>
        <label>5</label>
        <note>in cluster A</note>
    </ligand>
</feature>
<feature type="binding site" evidence="2">
    <location>
        <position position="35"/>
    </location>
    <ligand>
        <name>a divalent metal cation</name>
        <dbReference type="ChEBI" id="CHEBI:60240"/>
        <label>5</label>
        <note>in cluster A</note>
    </ligand>
</feature>
<feature type="binding site" evidence="2">
    <location>
        <position position="36"/>
    </location>
    <ligand>
        <name>a divalent metal cation</name>
        <dbReference type="ChEBI" id="CHEBI:60240"/>
        <label>5</label>
        <note>in cluster A</note>
    </ligand>
</feature>
<feature type="binding site" evidence="2">
    <location>
        <position position="36"/>
    </location>
    <ligand>
        <name>a divalent metal cation</name>
        <dbReference type="ChEBI" id="CHEBI:60240"/>
        <label>6</label>
        <note>in cluster A</note>
    </ligand>
</feature>
<feature type="binding site" evidence="2">
    <location>
        <position position="40"/>
    </location>
    <ligand>
        <name>a divalent metal cation</name>
        <dbReference type="ChEBI" id="CHEBI:60240"/>
        <label>6</label>
        <note>in cluster A</note>
    </ligand>
</feature>
<feature type="binding site" evidence="2">
    <location>
        <position position="43"/>
    </location>
    <ligand>
        <name>a divalent metal cation</name>
        <dbReference type="ChEBI" id="CHEBI:60240"/>
        <label>4</label>
        <note>in cluster A</note>
    </ligand>
</feature>
<feature type="binding site" evidence="2">
    <location>
        <position position="43"/>
    </location>
    <ligand>
        <name>a divalent metal cation</name>
        <dbReference type="ChEBI" id="CHEBI:60240"/>
        <label>6</label>
        <note>in cluster A</note>
    </ligand>
</feature>
<feature type="binding site" evidence="2">
    <location>
        <position position="47"/>
    </location>
    <ligand>
        <name>a divalent metal cation</name>
        <dbReference type="ChEBI" id="CHEBI:60240"/>
        <label>4</label>
        <note>in cluster A</note>
    </ligand>
</feature>
<feature type="binding site" evidence="2">
    <location>
        <position position="49"/>
    </location>
    <ligand>
        <name>a divalent metal cation</name>
        <dbReference type="ChEBI" id="CHEBI:60240"/>
        <label>5</label>
        <note>in cluster A</note>
    </ligand>
</feature>
<feature type="binding site" evidence="2">
    <location>
        <position position="49"/>
    </location>
    <ligand>
        <name>a divalent metal cation</name>
        <dbReference type="ChEBI" id="CHEBI:60240"/>
        <label>7</label>
        <note>in cluster A</note>
    </ligand>
</feature>
<feature type="binding site" evidence="3">
    <location>
        <position position="54"/>
    </location>
    <ligand>
        <name>a divalent metal cation</name>
        <dbReference type="ChEBI" id="CHEBI:60240"/>
        <label>7</label>
        <note>in cluster A</note>
    </ligand>
</feature>
<feature type="binding site" evidence="2">
    <location>
        <position position="58"/>
    </location>
    <ligand>
        <name>a divalent metal cation</name>
        <dbReference type="ChEBI" id="CHEBI:60240"/>
        <label>7</label>
        <note>in cluster A</note>
    </ligand>
</feature>
<feature type="binding site" evidence="2">
    <location>
        <position position="59"/>
    </location>
    <ligand>
        <name>a divalent metal cation</name>
        <dbReference type="ChEBI" id="CHEBI:60240"/>
        <label>6</label>
        <note>in cluster A</note>
    </ligand>
</feature>
<feature type="binding site" evidence="2">
    <location>
        <position position="59"/>
    </location>
    <ligand>
        <name>a divalent metal cation</name>
        <dbReference type="ChEBI" id="CHEBI:60240"/>
        <label>7</label>
        <note>in cluster A</note>
    </ligand>
</feature>
<feature type="sequence conflict" description="In Ref. 2; AAP31402." evidence="4" ref="2">
    <original>CDTSCCQ</original>
    <variation>LRYQLLSV</variation>
    <location>
        <begin position="54"/>
        <end position="60"/>
    </location>
</feature>
<comment type="function">
    <text evidence="1">Metallothioneins have a high content of cysteine residues that bind various heavy metals.</text>
</comment>
<comment type="domain">
    <text>Class I metallothioneins contain 2 metal-binding domains: four divalent ions are chelated within cluster A of the alpha domain and are coordinated via cysteinyl thiolate bridges to 11 cysteine ligands. Cluster B, the corresponding region within the beta domain, can ligate three divalent ions to 9 cysteines.</text>
</comment>
<comment type="similarity">
    <text evidence="4">Belongs to the metallothionein superfamily. Type 1 family.</text>
</comment>
<dbReference type="EMBL" id="AF013801">
    <property type="protein sequence ID" value="AAB66343.1"/>
    <property type="molecule type" value="mRNA"/>
</dbReference>
<dbReference type="EMBL" id="AY267818">
    <property type="protein sequence ID" value="AAP31402.2"/>
    <property type="molecule type" value="Genomic_DNA"/>
</dbReference>
<dbReference type="SMR" id="P68502"/>
<dbReference type="GO" id="GO:0046872">
    <property type="term" value="F:metal ion binding"/>
    <property type="evidence" value="ECO:0007669"/>
    <property type="project" value="UniProtKB-KW"/>
</dbReference>
<dbReference type="GO" id="GO:0046688">
    <property type="term" value="P:response to copper ion"/>
    <property type="evidence" value="ECO:0000250"/>
    <property type="project" value="AgBase"/>
</dbReference>
<dbReference type="FunFam" id="4.10.10.10:FF:000001">
    <property type="entry name" value="Metallothionein"/>
    <property type="match status" value="1"/>
</dbReference>
<dbReference type="Gene3D" id="4.10.10.10">
    <property type="entry name" value="Metallothionein Isoform II"/>
    <property type="match status" value="1"/>
</dbReference>
<dbReference type="InterPro" id="IPR017854">
    <property type="entry name" value="Metalthion_dom_sf"/>
</dbReference>
<dbReference type="InterPro" id="IPR023587">
    <property type="entry name" value="Metalthion_dom_sf_vert"/>
</dbReference>
<dbReference type="InterPro" id="IPR000006">
    <property type="entry name" value="Metalthion_vert"/>
</dbReference>
<dbReference type="InterPro" id="IPR018064">
    <property type="entry name" value="Metalthion_vert_metal_BS"/>
</dbReference>
<dbReference type="PANTHER" id="PTHR23299">
    <property type="entry name" value="METALLOTHIONEIN"/>
    <property type="match status" value="1"/>
</dbReference>
<dbReference type="PANTHER" id="PTHR23299:SF24">
    <property type="entry name" value="METALLOTHIONEIN-1X"/>
    <property type="match status" value="1"/>
</dbReference>
<dbReference type="Pfam" id="PF00131">
    <property type="entry name" value="Metallothio"/>
    <property type="match status" value="1"/>
</dbReference>
<dbReference type="PRINTS" id="PR00860">
    <property type="entry name" value="MTVERTEBRATE"/>
</dbReference>
<dbReference type="SUPFAM" id="SSF57868">
    <property type="entry name" value="Metallothionein"/>
    <property type="match status" value="1"/>
</dbReference>
<dbReference type="PROSITE" id="PS00203">
    <property type="entry name" value="METALLOTHIONEIN_VRT"/>
    <property type="match status" value="1"/>
</dbReference>
<evidence type="ECO:0000250" key="1"/>
<evidence type="ECO:0000250" key="2">
    <source>
        <dbReference type="UniProtKB" id="P02795"/>
    </source>
</evidence>
<evidence type="ECO:0000250" key="3">
    <source>
        <dbReference type="UniProtKB" id="P62339"/>
    </source>
</evidence>
<evidence type="ECO:0000305" key="4"/>
<keyword id="KW-0479">Metal-binding</keyword>
<keyword id="KW-0480">Metal-thiolate cluster</keyword>